<dbReference type="EMBL" id="AF218865">
    <property type="protein sequence ID" value="AAF32324.1"/>
    <property type="molecule type" value="mRNA"/>
</dbReference>
<dbReference type="EMBL" id="AK076228">
    <property type="protein sequence ID" value="BAC36262.1"/>
    <property type="molecule type" value="mRNA"/>
</dbReference>
<dbReference type="EMBL" id="BC053007">
    <property type="protein sequence ID" value="AAH53007.1"/>
    <property type="molecule type" value="mRNA"/>
</dbReference>
<dbReference type="CCDS" id="CCDS17253.1"/>
<dbReference type="RefSeq" id="NP_067535.3">
    <property type="nucleotide sequence ID" value="NM_021560.4"/>
</dbReference>
<dbReference type="SMR" id="Q8C6A8"/>
<dbReference type="BioGRID" id="208520">
    <property type="interactions" value="1"/>
</dbReference>
<dbReference type="FunCoup" id="Q8C6A8">
    <property type="interactions" value="1145"/>
</dbReference>
<dbReference type="STRING" id="10090.ENSMUSP00000026120"/>
<dbReference type="BindingDB" id="Q8C6A8"/>
<dbReference type="GlyGen" id="Q8C6A8">
    <property type="glycosylation" value="1 site"/>
</dbReference>
<dbReference type="PhosphoSitePlus" id="Q8C6A8"/>
<dbReference type="SwissPalm" id="Q8C6A8"/>
<dbReference type="PaxDb" id="10090-ENSMUSP00000026120"/>
<dbReference type="ProteomicsDB" id="273487"/>
<dbReference type="DNASU" id="59058"/>
<dbReference type="GeneID" id="59058"/>
<dbReference type="KEGG" id="mmu:59058"/>
<dbReference type="UCSC" id="uc008orl.2">
    <property type="organism name" value="mouse"/>
</dbReference>
<dbReference type="AGR" id="MGI:1930001"/>
<dbReference type="CTD" id="27319"/>
<dbReference type="MGI" id="MGI:1930001">
    <property type="gene designation" value="Bhlhe22"/>
</dbReference>
<dbReference type="eggNOG" id="KOG3898">
    <property type="taxonomic scope" value="Eukaryota"/>
</dbReference>
<dbReference type="InParanoid" id="Q8C6A8"/>
<dbReference type="OrthoDB" id="10011855at2759"/>
<dbReference type="PhylomeDB" id="Q8C6A8"/>
<dbReference type="TreeFam" id="TF322733"/>
<dbReference type="BioGRID-ORCS" id="59058">
    <property type="hits" value="1 hit in 77 CRISPR screens"/>
</dbReference>
<dbReference type="PRO" id="PR:Q8C6A8"/>
<dbReference type="Proteomes" id="UP000000589">
    <property type="component" value="Unplaced"/>
</dbReference>
<dbReference type="RNAct" id="Q8C6A8">
    <property type="molecule type" value="protein"/>
</dbReference>
<dbReference type="GO" id="GO:0005654">
    <property type="term" value="C:nucleoplasm"/>
    <property type="evidence" value="ECO:0000304"/>
    <property type="project" value="Reactome"/>
</dbReference>
<dbReference type="GO" id="GO:0005634">
    <property type="term" value="C:nucleus"/>
    <property type="evidence" value="ECO:0000314"/>
    <property type="project" value="MGI"/>
</dbReference>
<dbReference type="GO" id="GO:0003682">
    <property type="term" value="F:chromatin binding"/>
    <property type="evidence" value="ECO:0000314"/>
    <property type="project" value="MGI"/>
</dbReference>
<dbReference type="GO" id="GO:0000981">
    <property type="term" value="F:DNA-binding transcription factor activity, RNA polymerase II-specific"/>
    <property type="evidence" value="ECO:0000315"/>
    <property type="project" value="MGI"/>
</dbReference>
<dbReference type="GO" id="GO:0042802">
    <property type="term" value="F:identical protein binding"/>
    <property type="evidence" value="ECO:0000353"/>
    <property type="project" value="MGI"/>
</dbReference>
<dbReference type="GO" id="GO:0046983">
    <property type="term" value="F:protein dimerization activity"/>
    <property type="evidence" value="ECO:0007669"/>
    <property type="project" value="InterPro"/>
</dbReference>
<dbReference type="GO" id="GO:0035881">
    <property type="term" value="P:amacrine cell differentiation"/>
    <property type="evidence" value="ECO:0000315"/>
    <property type="project" value="MGI"/>
</dbReference>
<dbReference type="GO" id="GO:0021960">
    <property type="term" value="P:anterior commissure morphogenesis"/>
    <property type="evidence" value="ECO:0000315"/>
    <property type="project" value="MGI"/>
</dbReference>
<dbReference type="GO" id="GO:0021952">
    <property type="term" value="P:central nervous system projection neuron axonogenesis"/>
    <property type="evidence" value="ECO:0000315"/>
    <property type="project" value="MGI"/>
</dbReference>
<dbReference type="GO" id="GO:0021796">
    <property type="term" value="P:cerebral cortex regionalization"/>
    <property type="evidence" value="ECO:0000315"/>
    <property type="project" value="MGI"/>
</dbReference>
<dbReference type="GO" id="GO:0021540">
    <property type="term" value="P:corpus callosum morphogenesis"/>
    <property type="evidence" value="ECO:0000315"/>
    <property type="project" value="MGI"/>
</dbReference>
<dbReference type="GO" id="GO:0021957">
    <property type="term" value="P:corticospinal tract morphogenesis"/>
    <property type="evidence" value="ECO:0000315"/>
    <property type="project" value="MGI"/>
</dbReference>
<dbReference type="GO" id="GO:0097154">
    <property type="term" value="P:GABAergic neuron differentiation"/>
    <property type="evidence" value="ECO:0000315"/>
    <property type="project" value="MGI"/>
</dbReference>
<dbReference type="GO" id="GO:0045892">
    <property type="term" value="P:negative regulation of DNA-templated transcription"/>
    <property type="evidence" value="ECO:0000314"/>
    <property type="project" value="MGI"/>
</dbReference>
<dbReference type="GO" id="GO:0060042">
    <property type="term" value="P:retina morphogenesis in camera-type eye"/>
    <property type="evidence" value="ECO:0000315"/>
    <property type="project" value="MGI"/>
</dbReference>
<dbReference type="GO" id="GO:0060040">
    <property type="term" value="P:retinal bipolar neuron differentiation"/>
    <property type="evidence" value="ECO:0000315"/>
    <property type="project" value="MGI"/>
</dbReference>
<dbReference type="CDD" id="cd18954">
    <property type="entry name" value="bHLH_TS_bHLHe22_bHLHb5"/>
    <property type="match status" value="1"/>
</dbReference>
<dbReference type="FunFam" id="4.10.280.10:FF:000026">
    <property type="entry name" value="Basic helix-loop-helix family, member e23"/>
    <property type="match status" value="1"/>
</dbReference>
<dbReference type="Gene3D" id="4.10.280.10">
    <property type="entry name" value="Helix-loop-helix DNA-binding domain"/>
    <property type="match status" value="1"/>
</dbReference>
<dbReference type="InterPro" id="IPR011598">
    <property type="entry name" value="bHLH_dom"/>
</dbReference>
<dbReference type="InterPro" id="IPR050359">
    <property type="entry name" value="bHLH_transcription_factors"/>
</dbReference>
<dbReference type="InterPro" id="IPR036638">
    <property type="entry name" value="HLH_DNA-bd_sf"/>
</dbReference>
<dbReference type="PANTHER" id="PTHR19290">
    <property type="entry name" value="BASIC HELIX-LOOP-HELIX PROTEIN NEUROGENIN-RELATED"/>
    <property type="match status" value="1"/>
</dbReference>
<dbReference type="PANTHER" id="PTHR19290:SF52">
    <property type="entry name" value="CLASS E BASIC HELIX-LOOP-HELIX PROTEIN 22"/>
    <property type="match status" value="1"/>
</dbReference>
<dbReference type="Pfam" id="PF00010">
    <property type="entry name" value="HLH"/>
    <property type="match status" value="1"/>
</dbReference>
<dbReference type="SMART" id="SM00353">
    <property type="entry name" value="HLH"/>
    <property type="match status" value="1"/>
</dbReference>
<dbReference type="SUPFAM" id="SSF47459">
    <property type="entry name" value="HLH, helix-loop-helix DNA-binding domain"/>
    <property type="match status" value="1"/>
</dbReference>
<dbReference type="PROSITE" id="PS50888">
    <property type="entry name" value="BHLH"/>
    <property type="match status" value="1"/>
</dbReference>
<reference key="1">
    <citation type="journal article" date="2002" name="Genomics">
        <title>Functional and structural characterization of the human gene BHLHB5, encoding a basic helix-loop-helix transcription factor.</title>
        <authorList>
            <person name="Xu Z.-P."/>
            <person name="Dutra A."/>
            <person name="Stellrecht C.M."/>
            <person name="Wu C."/>
            <person name="Piatigorsky J."/>
            <person name="Saunders G.F."/>
        </authorList>
    </citation>
    <scope>NUCLEOTIDE SEQUENCE [MRNA]</scope>
    <scope>TISSUE SPECIFICITY</scope>
</reference>
<reference key="2">
    <citation type="journal article" date="2005" name="Science">
        <title>The transcriptional landscape of the mammalian genome.</title>
        <authorList>
            <person name="Carninci P."/>
            <person name="Kasukawa T."/>
            <person name="Katayama S."/>
            <person name="Gough J."/>
            <person name="Frith M.C."/>
            <person name="Maeda N."/>
            <person name="Oyama R."/>
            <person name="Ravasi T."/>
            <person name="Lenhard B."/>
            <person name="Wells C."/>
            <person name="Kodzius R."/>
            <person name="Shimokawa K."/>
            <person name="Bajic V.B."/>
            <person name="Brenner S.E."/>
            <person name="Batalov S."/>
            <person name="Forrest A.R."/>
            <person name="Zavolan M."/>
            <person name="Davis M.J."/>
            <person name="Wilming L.G."/>
            <person name="Aidinis V."/>
            <person name="Allen J.E."/>
            <person name="Ambesi-Impiombato A."/>
            <person name="Apweiler R."/>
            <person name="Aturaliya R.N."/>
            <person name="Bailey T.L."/>
            <person name="Bansal M."/>
            <person name="Baxter L."/>
            <person name="Beisel K.W."/>
            <person name="Bersano T."/>
            <person name="Bono H."/>
            <person name="Chalk A.M."/>
            <person name="Chiu K.P."/>
            <person name="Choudhary V."/>
            <person name="Christoffels A."/>
            <person name="Clutterbuck D.R."/>
            <person name="Crowe M.L."/>
            <person name="Dalla E."/>
            <person name="Dalrymple B.P."/>
            <person name="de Bono B."/>
            <person name="Della Gatta G."/>
            <person name="di Bernardo D."/>
            <person name="Down T."/>
            <person name="Engstrom P."/>
            <person name="Fagiolini M."/>
            <person name="Faulkner G."/>
            <person name="Fletcher C.F."/>
            <person name="Fukushima T."/>
            <person name="Furuno M."/>
            <person name="Futaki S."/>
            <person name="Gariboldi M."/>
            <person name="Georgii-Hemming P."/>
            <person name="Gingeras T.R."/>
            <person name="Gojobori T."/>
            <person name="Green R.E."/>
            <person name="Gustincich S."/>
            <person name="Harbers M."/>
            <person name="Hayashi Y."/>
            <person name="Hensch T.K."/>
            <person name="Hirokawa N."/>
            <person name="Hill D."/>
            <person name="Huminiecki L."/>
            <person name="Iacono M."/>
            <person name="Ikeo K."/>
            <person name="Iwama A."/>
            <person name="Ishikawa T."/>
            <person name="Jakt M."/>
            <person name="Kanapin A."/>
            <person name="Katoh M."/>
            <person name="Kawasawa Y."/>
            <person name="Kelso J."/>
            <person name="Kitamura H."/>
            <person name="Kitano H."/>
            <person name="Kollias G."/>
            <person name="Krishnan S.P."/>
            <person name="Kruger A."/>
            <person name="Kummerfeld S.K."/>
            <person name="Kurochkin I.V."/>
            <person name="Lareau L.F."/>
            <person name="Lazarevic D."/>
            <person name="Lipovich L."/>
            <person name="Liu J."/>
            <person name="Liuni S."/>
            <person name="McWilliam S."/>
            <person name="Madan Babu M."/>
            <person name="Madera M."/>
            <person name="Marchionni L."/>
            <person name="Matsuda H."/>
            <person name="Matsuzawa S."/>
            <person name="Miki H."/>
            <person name="Mignone F."/>
            <person name="Miyake S."/>
            <person name="Morris K."/>
            <person name="Mottagui-Tabar S."/>
            <person name="Mulder N."/>
            <person name="Nakano N."/>
            <person name="Nakauchi H."/>
            <person name="Ng P."/>
            <person name="Nilsson R."/>
            <person name="Nishiguchi S."/>
            <person name="Nishikawa S."/>
            <person name="Nori F."/>
            <person name="Ohara O."/>
            <person name="Okazaki Y."/>
            <person name="Orlando V."/>
            <person name="Pang K.C."/>
            <person name="Pavan W.J."/>
            <person name="Pavesi G."/>
            <person name="Pesole G."/>
            <person name="Petrovsky N."/>
            <person name="Piazza S."/>
            <person name="Reed J."/>
            <person name="Reid J.F."/>
            <person name="Ring B.Z."/>
            <person name="Ringwald M."/>
            <person name="Rost B."/>
            <person name="Ruan Y."/>
            <person name="Salzberg S.L."/>
            <person name="Sandelin A."/>
            <person name="Schneider C."/>
            <person name="Schoenbach C."/>
            <person name="Sekiguchi K."/>
            <person name="Semple C.A."/>
            <person name="Seno S."/>
            <person name="Sessa L."/>
            <person name="Sheng Y."/>
            <person name="Shibata Y."/>
            <person name="Shimada H."/>
            <person name="Shimada K."/>
            <person name="Silva D."/>
            <person name="Sinclair B."/>
            <person name="Sperling S."/>
            <person name="Stupka E."/>
            <person name="Sugiura K."/>
            <person name="Sultana R."/>
            <person name="Takenaka Y."/>
            <person name="Taki K."/>
            <person name="Tammoja K."/>
            <person name="Tan S.L."/>
            <person name="Tang S."/>
            <person name="Taylor M.S."/>
            <person name="Tegner J."/>
            <person name="Teichmann S.A."/>
            <person name="Ueda H.R."/>
            <person name="van Nimwegen E."/>
            <person name="Verardo R."/>
            <person name="Wei C.L."/>
            <person name="Yagi K."/>
            <person name="Yamanishi H."/>
            <person name="Zabarovsky E."/>
            <person name="Zhu S."/>
            <person name="Zimmer A."/>
            <person name="Hide W."/>
            <person name="Bult C."/>
            <person name="Grimmond S.M."/>
            <person name="Teasdale R.D."/>
            <person name="Liu E.T."/>
            <person name="Brusic V."/>
            <person name="Quackenbush J."/>
            <person name="Wahlestedt C."/>
            <person name="Mattick J.S."/>
            <person name="Hume D.A."/>
            <person name="Kai C."/>
            <person name="Sasaki D."/>
            <person name="Tomaru Y."/>
            <person name="Fukuda S."/>
            <person name="Kanamori-Katayama M."/>
            <person name="Suzuki M."/>
            <person name="Aoki J."/>
            <person name="Arakawa T."/>
            <person name="Iida J."/>
            <person name="Imamura K."/>
            <person name="Itoh M."/>
            <person name="Kato T."/>
            <person name="Kawaji H."/>
            <person name="Kawagashira N."/>
            <person name="Kawashima T."/>
            <person name="Kojima M."/>
            <person name="Kondo S."/>
            <person name="Konno H."/>
            <person name="Nakano K."/>
            <person name="Ninomiya N."/>
            <person name="Nishio T."/>
            <person name="Okada M."/>
            <person name="Plessy C."/>
            <person name="Shibata K."/>
            <person name="Shiraki T."/>
            <person name="Suzuki S."/>
            <person name="Tagami M."/>
            <person name="Waki K."/>
            <person name="Watahiki A."/>
            <person name="Okamura-Oho Y."/>
            <person name="Suzuki H."/>
            <person name="Kawai J."/>
            <person name="Hayashizaki Y."/>
        </authorList>
    </citation>
    <scope>NUCLEOTIDE SEQUENCE [LARGE SCALE MRNA]</scope>
    <source>
        <strain>C57BL/6J</strain>
        <tissue>Head</tissue>
    </source>
</reference>
<reference key="3">
    <citation type="journal article" date="2004" name="Genome Res.">
        <title>The status, quality, and expansion of the NIH full-length cDNA project: the Mammalian Gene Collection (MGC).</title>
        <authorList>
            <consortium name="The MGC Project Team"/>
        </authorList>
    </citation>
    <scope>NUCLEOTIDE SEQUENCE [LARGE SCALE MRNA]</scope>
    <source>
        <strain>C57BL/6J</strain>
        <tissue>Brain</tissue>
    </source>
</reference>
<reference key="4">
    <citation type="journal article" date="2003" name="Gene Expr. Patterns">
        <title>Bhlhb5 is expressed in the CNS and sensory organs during mouse embryonic development.</title>
        <authorList>
            <person name="Brunelli S."/>
            <person name="Innocenzi A."/>
            <person name="Cossu G."/>
        </authorList>
    </citation>
    <scope>DEVELOPMENTAL STAGE</scope>
</reference>
<reference key="5">
    <citation type="journal article" date="2006" name="Development">
        <title>Requirement for Bhlhb5 in the specification of amacrine and cone bipolar subtypes in mouse retina.</title>
        <authorList>
            <person name="Feng L."/>
            <person name="Xie X."/>
            <person name="Joshi P.S."/>
            <person name="Yang Z."/>
            <person name="Shibasaki K."/>
            <person name="Chow R.L."/>
            <person name="Gan L."/>
        </authorList>
    </citation>
    <scope>FUNCTION</scope>
    <scope>DEVELOPMENTAL STAGE</scope>
</reference>
<reference key="6">
    <citation type="journal article" date="2008" name="Neuron">
        <title>Bhlhb5 regulates the postmitotic acquisition of area identities in layers II-V of the developing neocortex.</title>
        <authorList>
            <person name="Joshi P.S."/>
            <person name="Molyneaux B.J."/>
            <person name="Feng L."/>
            <person name="Xie X."/>
            <person name="Macklis J.D."/>
            <person name="Gan L."/>
        </authorList>
    </citation>
    <scope>FUNCTION</scope>
    <scope>DEVELOPMENTAL STAGE</scope>
    <scope>DISRUPTION PHENOTYPE</scope>
</reference>
<reference key="7">
    <citation type="journal article" date="2010" name="Neuron">
        <title>Loss of inhibitory interneurons in the dorsal spinal cord and elevated itch in Bhlhb5 mutant mice.</title>
        <authorList>
            <person name="Ross S.E."/>
            <person name="Mardinly A.R."/>
            <person name="McCord A.E."/>
            <person name="Zurawski J."/>
            <person name="Cohen S."/>
            <person name="Jung C."/>
            <person name="Hu L."/>
            <person name="Mok S.I."/>
            <person name="Shah A."/>
            <person name="Savner E.M."/>
            <person name="Tolias C."/>
            <person name="Corfas R."/>
            <person name="Chen S."/>
            <person name="Inquimbert P."/>
            <person name="Xu Y."/>
            <person name="McInnes R.R."/>
            <person name="Rice F.L."/>
            <person name="Corfas G."/>
            <person name="Ma Q."/>
            <person name="Woolf C.J."/>
            <person name="Greenberg M.E."/>
        </authorList>
    </citation>
    <scope>FUNCTION</scope>
    <scope>DEVELOPMENTAL STAGE</scope>
    <scope>DISRUPTION PHENOTYPE</scope>
</reference>
<reference key="8">
    <citation type="journal article" date="2012" name="Neuron">
        <title>Bhlhb5 and Prdm8 form a repressor complex involved in neuronal circuit assembly.</title>
        <authorList>
            <person name="Ross S.E."/>
            <person name="McCord A.E."/>
            <person name="Jung C."/>
            <person name="Atan D."/>
            <person name="Mok S.I."/>
            <person name="Hemberg M."/>
            <person name="Kim T.K."/>
            <person name="Salogiannis J."/>
            <person name="Hu L."/>
            <person name="Cohen S."/>
            <person name="Lin Y."/>
            <person name="Harrar D."/>
            <person name="McInnes R.R."/>
            <person name="Greenberg M.E."/>
        </authorList>
    </citation>
    <scope>FUNCTION</scope>
    <scope>INTERACTION WITH PRDM8</scope>
</reference>
<feature type="chain" id="PRO_0000274286" description="Class E basic helix-loop-helix protein 22">
    <location>
        <begin position="1"/>
        <end position="355"/>
    </location>
</feature>
<feature type="domain" description="bHLH" evidence="2">
    <location>
        <begin position="216"/>
        <end position="270"/>
    </location>
</feature>
<feature type="region of interest" description="Disordered" evidence="3">
    <location>
        <begin position="34"/>
        <end position="90"/>
    </location>
</feature>
<feature type="region of interest" description="Disordered" evidence="3">
    <location>
        <begin position="128"/>
        <end position="215"/>
    </location>
</feature>
<feature type="compositionally biased region" description="Gly residues" evidence="3">
    <location>
        <begin position="81"/>
        <end position="90"/>
    </location>
</feature>
<feature type="compositionally biased region" description="Gly residues" evidence="3">
    <location>
        <begin position="185"/>
        <end position="207"/>
    </location>
</feature>
<feature type="sequence conflict" description="In Ref. 1; AAF32324." evidence="10" ref="1">
    <original>R</original>
    <variation>L</variation>
    <location>
        <position position="75"/>
    </location>
</feature>
<feature type="sequence conflict" description="In Ref. 1; AAF32324." evidence="10" ref="1">
    <original>L</original>
    <variation>R</variation>
    <location>
        <position position="149"/>
    </location>
</feature>
<feature type="sequence conflict" description="In Ref. 1; AAF32324." evidence="10" ref="1">
    <original>R</original>
    <variation>G</variation>
    <location>
        <position position="166"/>
    </location>
</feature>
<gene>
    <name type="primary">Bhlhe22</name>
    <name type="synonym">Bhlhb5</name>
</gene>
<keyword id="KW-0524">Neurogenesis</keyword>
<keyword id="KW-0539">Nucleus</keyword>
<keyword id="KW-1185">Reference proteome</keyword>
<keyword id="KW-0678">Repressor</keyword>
<keyword id="KW-0804">Transcription</keyword>
<keyword id="KW-0805">Transcription regulation</keyword>
<protein>
    <recommendedName>
        <fullName>Class E basic helix-loop-helix protein 22</fullName>
        <shortName>bHLHe22</shortName>
    </recommendedName>
    <alternativeName>
        <fullName>Class B basic helix-loop-helix protein 5</fullName>
        <shortName>bHLHb5</shortName>
    </alternativeName>
    <alternativeName>
        <fullName>Protein BETA3</fullName>
    </alternativeName>
</protein>
<proteinExistence type="evidence at protein level"/>
<organism>
    <name type="scientific">Mus musculus</name>
    <name type="common">Mouse</name>
    <dbReference type="NCBI Taxonomy" id="10090"/>
    <lineage>
        <taxon>Eukaryota</taxon>
        <taxon>Metazoa</taxon>
        <taxon>Chordata</taxon>
        <taxon>Craniata</taxon>
        <taxon>Vertebrata</taxon>
        <taxon>Euteleostomi</taxon>
        <taxon>Mammalia</taxon>
        <taxon>Eutheria</taxon>
        <taxon>Euarchontoglires</taxon>
        <taxon>Glires</taxon>
        <taxon>Rodentia</taxon>
        <taxon>Myomorpha</taxon>
        <taxon>Muroidea</taxon>
        <taxon>Muridae</taxon>
        <taxon>Murinae</taxon>
        <taxon>Mus</taxon>
        <taxon>Mus</taxon>
    </lineage>
</organism>
<accession>Q8C6A8</accession>
<accession>Q9JL05</accession>
<comment type="function">
    <text evidence="1 6 7 8 9">Inhibits DNA binding of TCF3/E47 homodimers and TCF3 (E47)/NEUROD1 heterodimers and acts as a strong repressor of Neurod1 and Myod-responsive genes, probably by heterodimerization with class a basic helix-loop-helix factors. Despite the presence of an intact basic domain, does not bind to DNA (By similarity). In the brain, may function as an area-specific transcription factor that regulates the postmitotic acquisition of area identities and elucidate the genetic hierarchy between progenitors and postmitotic neurons driving neocortical arealization. May be required for the survival of a specific population of inhibitory neurons in the superficial laminae of the spinal cord dorsal horn that may regulate pruritis. Seems to play a crucial role in the retinogenesis, in the specification of amacrine and bipolar subtypes. Forms with PRDM8 a transcriptional repressor complex controlling genes involved in neural development and neuronal differentiation (PubMed:22284184).</text>
</comment>
<comment type="subunit">
    <text evidence="9">Interacts with PRDM8.</text>
</comment>
<comment type="subcellular location">
    <subcellularLocation>
        <location evidence="10">Nucleus</location>
    </subcellularLocation>
</comment>
<comment type="tissue specificity">
    <text evidence="4">Brain-specific, with the highest expression in the cerebellum.</text>
</comment>
<comment type="developmental stage">
    <text evidence="5 6 7 8">Expressed at 11.5 dpc within the neuroblast layer (NBL) of the central retina. As retinogenesis progressed from central to peripheral retina from 12 dpc to 15.5 dpc, expression expanded to the entire retina with the majority of Bhlhb5+ cells being detected in the proliferating NBL. From 17.5 dpc to birth (P0), expression became restricted to the ganglion cell layer (GCL) and to the inner boundary of the NBL (INL; inner nuclear layer), presumably the newly formed ACL (amacrine cells). Predominantly expressed in post-mitotic cells in the developing retina. Expressed from 9.5 dpc in the neural tube, restricted to longitudinal ventral columns of neurons, extending from the hindbrain to the caudal spinal cord. In the developing cortex, at 12.5 dpc, expressed in the nascent cortical plate of the dorsal telencephalon (at protein level). During peak production of deep layer neurons between 12.5 and 13.5 dpc, restricted to postmigrational neurons, with no expression in the proliferative ventricular zone (VZ) or in migrating neurons. Between 15.5 and 17.5 dpc, when superficial layer neurons are generated, strongly expressed in the cortical plate and weakly in presumptive migrating neurons and in the subventricular zone (SVZ). Does not colocalize with proliferating progenitors in S or M phase in either the VZ or the SVZ; restricted to postmitotic glutamatergic projection neurons during neurogenesis. Not detected in cortical GABAergic interneurons or their extracortical sites of genesis, the medial and caudal ganglionic eminences (at protein level). Postnatally, down-regulation begins at the junction of the cingulate cortex and neocortex; by postnatal day 4 (P4), down-regulation well into the neocortex is observed anteriorly, with the exception of the most superficial layer. At P4, expressed in neocortical layers II, III, IV, and V. Within layer VI, expressed in only very rare scattered TBR1 negative neurons. Down-regulation continues from medial to lateral, exhibiting a markedly reduced expression by P14. Expression varies strikingly along the A-P axis with a precipitous decrease in the rostral cortical plate. At 12.5 dpc, highly expressed medially in the cingulate cortex with weak expression in the rest of the cortex. At 15.5 dpc, expressed in a high caudomedial to a low rostrolateral gradient. Between 15.5dpc and P0, expression increases laterally and the gradient gradually transforms into a sharp border between the presumptive rostral motor and sensory domains. During the first postnatal week, there is a further transformation from homogeneous expression across sensory cortex into discrete areas of high expression coincident with the primary sensory areas. At P4 and P7, expressed in primary visual cortex, primary auditory cortex and distinct primary somatosensory representations, including the vibrissal barrel field. In the spinal cord, transiently expressed in V1, V2, and dI6 interneurons at 10.5 dpc. Also observed in a subpopulation of late-born neurons that migrate to the superficial layers of the dorsal horn. Expression starts shortly after the neurons exit mitosis at 13.5 dpc and persisting for up to 2 weeks postnatally. At birth, about one-third of dorsal horn neurons expressing the protein are excitatory and two-thirds inhibitory. Also expressed in the developing eye and hair follicles, in the epithelial layer of the cochlea in the developing inner, and in the nasal epithelium. At 16.5 dpc, expressed outside the CNS, in particular in all sensory organs; in the nasal pits, transcripts can be detected in the olfactory epithelium. In the developing eye it can be found in the inner and outer retinal layer, and it is also detectable in the sensory layer of the cochlea in the developing inner ear. In addition, expression is found in the developing hair follicles, both in the epithelial component and in the dermal papilla, and in the skin.</text>
</comment>
<comment type="disruption phenotype">
    <text evidence="7 8">Null mice exhibits aberrant expression of brain area-specific genes and structural organization in the somatosensory and caudal motor cortices. In somatosensory cortex, vibrissal barrels display postsynaptic disorganization. In caudal motor cortex, anomalous differentiation of corticospinal motor neurons is observed, accompanied by failure of corticospinal tract formation. Mice also develop self-inflicted skin lesions and show significantly enhanced scratching responses to pruritic agents, due to the selective loss of a subset of spinal cord inhibitory interneurons.</text>
</comment>
<evidence type="ECO:0000250" key="1"/>
<evidence type="ECO:0000255" key="2">
    <source>
        <dbReference type="PROSITE-ProRule" id="PRU00981"/>
    </source>
</evidence>
<evidence type="ECO:0000256" key="3">
    <source>
        <dbReference type="SAM" id="MobiDB-lite"/>
    </source>
</evidence>
<evidence type="ECO:0000269" key="4">
    <source>
    </source>
</evidence>
<evidence type="ECO:0000269" key="5">
    <source>
    </source>
</evidence>
<evidence type="ECO:0000269" key="6">
    <source>
    </source>
</evidence>
<evidence type="ECO:0000269" key="7">
    <source>
    </source>
</evidence>
<evidence type="ECO:0000269" key="8">
    <source>
    </source>
</evidence>
<evidence type="ECO:0000269" key="9">
    <source>
    </source>
</evidence>
<evidence type="ECO:0000305" key="10"/>
<sequence>MERGLHLGAAAASEDDLFLHKSLGTSAAKRLEAAFRSTPPGMDLSLAPPTRERPASSSSPLGCFEPADPEGAGLRLPPPGGGGGASGGGGGVSVPGLLVGSAGVGGEPSLSSLPAGAALCLKYGESAGRGSVAESSGGEQSPDDDSDGLCELVLRAGGPDPRASPRAGGGSAKVAEGCSNAHLHGGSGLPPGGPTSGGGSGGGGGGSSKKSKEQKALRLNINARERRRMHDLNDALDELRAVIPYAHSPSVRKLSKIATLLLAKNYILMQAQALEEMRRLVAYLNQGQAISAASLPSSAAAAAAAAALHPALGAYEQAAGYPFSAGLPPAASCPEKCALFNSVSSSLCKQCTEKP</sequence>
<name>BHE22_MOUSE</name>